<dbReference type="EMBL" id="CR382134">
    <property type="protein sequence ID" value="CAG85273.2"/>
    <property type="molecule type" value="Genomic_DNA"/>
</dbReference>
<dbReference type="RefSeq" id="XP_457272.2">
    <property type="nucleotide sequence ID" value="XM_457272.1"/>
</dbReference>
<dbReference type="SMR" id="Q6BWZ7"/>
<dbReference type="FunCoup" id="Q6BWZ7">
    <property type="interactions" value="494"/>
</dbReference>
<dbReference type="STRING" id="284592.Q6BWZ7"/>
<dbReference type="GeneID" id="2913054"/>
<dbReference type="KEGG" id="dha:DEHA2B07216g"/>
<dbReference type="VEuPathDB" id="FungiDB:DEHA2B07216g"/>
<dbReference type="eggNOG" id="KOG4776">
    <property type="taxonomic scope" value="Eukaryota"/>
</dbReference>
<dbReference type="HOGENOM" id="CLU_062474_1_0_1"/>
<dbReference type="InParanoid" id="Q6BWZ7"/>
<dbReference type="OMA" id="LDWAAYV"/>
<dbReference type="OrthoDB" id="445677at2759"/>
<dbReference type="Proteomes" id="UP000000599">
    <property type="component" value="Chromosome B"/>
</dbReference>
<dbReference type="GO" id="GO:0000812">
    <property type="term" value="C:Swr1 complex"/>
    <property type="evidence" value="ECO:0007669"/>
    <property type="project" value="TreeGrafter"/>
</dbReference>
<dbReference type="GO" id="GO:0006325">
    <property type="term" value="P:chromatin organization"/>
    <property type="evidence" value="ECO:0007669"/>
    <property type="project" value="UniProtKB-KW"/>
</dbReference>
<dbReference type="InterPro" id="IPR011421">
    <property type="entry name" value="BCNT-C"/>
</dbReference>
<dbReference type="InterPro" id="IPR027124">
    <property type="entry name" value="Swc5/CFDP1/2"/>
</dbReference>
<dbReference type="PANTHER" id="PTHR48407">
    <property type="entry name" value="CRANIOFACIAL DEVELOPMENT PROTEIN 1"/>
    <property type="match status" value="1"/>
</dbReference>
<dbReference type="PANTHER" id="PTHR48407:SF1">
    <property type="entry name" value="CRANIOFACIAL DEVELOPMENT PROTEIN 1"/>
    <property type="match status" value="1"/>
</dbReference>
<dbReference type="Pfam" id="PF07572">
    <property type="entry name" value="BCNT"/>
    <property type="match status" value="1"/>
</dbReference>
<dbReference type="PROSITE" id="PS51279">
    <property type="entry name" value="BCNT_C"/>
    <property type="match status" value="1"/>
</dbReference>
<sequence>MGKQKATRVNGILKKEEQTIDDDSLKKEKQAIDDEDYDEDEDEDYDPEAKVEEEKEASDEESDHEPQPDYSSIENATFQDRLVKTRSQRHQEKYGSNAGINHIRPGLIKSDDISKNIDVDAIFNDLQRKSKSGTPDDWKASIEEEQAKTESIKYNNANSKQTTNISSADTPQEDNSLDPQKVKIESSYTFAGKVITESKLVDAGSAEAKAYFNSTKGITASNLKASAATRSFVPIIRTIPGSTEPTELRIKLKRPSLIDKFLSTYGDKKQKLSTLEKSRLDWASFVDQKKLKDDLSTHNKGGYLDKQEFLGRLQDKRDEHYQKAKEEERKRQWQSQQQQSL</sequence>
<reference key="1">
    <citation type="journal article" date="2004" name="Nature">
        <title>Genome evolution in yeasts.</title>
        <authorList>
            <person name="Dujon B."/>
            <person name="Sherman D."/>
            <person name="Fischer G."/>
            <person name="Durrens P."/>
            <person name="Casaregola S."/>
            <person name="Lafontaine I."/>
            <person name="de Montigny J."/>
            <person name="Marck C."/>
            <person name="Neuveglise C."/>
            <person name="Talla E."/>
            <person name="Goffard N."/>
            <person name="Frangeul L."/>
            <person name="Aigle M."/>
            <person name="Anthouard V."/>
            <person name="Babour A."/>
            <person name="Barbe V."/>
            <person name="Barnay S."/>
            <person name="Blanchin S."/>
            <person name="Beckerich J.-M."/>
            <person name="Beyne E."/>
            <person name="Bleykasten C."/>
            <person name="Boisrame A."/>
            <person name="Boyer J."/>
            <person name="Cattolico L."/>
            <person name="Confanioleri F."/>
            <person name="de Daruvar A."/>
            <person name="Despons L."/>
            <person name="Fabre E."/>
            <person name="Fairhead C."/>
            <person name="Ferry-Dumazet H."/>
            <person name="Groppi A."/>
            <person name="Hantraye F."/>
            <person name="Hennequin C."/>
            <person name="Jauniaux N."/>
            <person name="Joyet P."/>
            <person name="Kachouri R."/>
            <person name="Kerrest A."/>
            <person name="Koszul R."/>
            <person name="Lemaire M."/>
            <person name="Lesur I."/>
            <person name="Ma L."/>
            <person name="Muller H."/>
            <person name="Nicaud J.-M."/>
            <person name="Nikolski M."/>
            <person name="Oztas S."/>
            <person name="Ozier-Kalogeropoulos O."/>
            <person name="Pellenz S."/>
            <person name="Potier S."/>
            <person name="Richard G.-F."/>
            <person name="Straub M.-L."/>
            <person name="Suleau A."/>
            <person name="Swennen D."/>
            <person name="Tekaia F."/>
            <person name="Wesolowski-Louvel M."/>
            <person name="Westhof E."/>
            <person name="Wirth B."/>
            <person name="Zeniou-Meyer M."/>
            <person name="Zivanovic Y."/>
            <person name="Bolotin-Fukuhara M."/>
            <person name="Thierry A."/>
            <person name="Bouchier C."/>
            <person name="Caudron B."/>
            <person name="Scarpelli C."/>
            <person name="Gaillardin C."/>
            <person name="Weissenbach J."/>
            <person name="Wincker P."/>
            <person name="Souciet J.-L."/>
        </authorList>
    </citation>
    <scope>NUCLEOTIDE SEQUENCE [LARGE SCALE GENOMIC DNA]</scope>
    <source>
        <strain>ATCC 36239 / CBS 767 / BCRC 21394 / JCM 1990 / NBRC 0083 / IGC 2968</strain>
    </source>
</reference>
<comment type="function">
    <text evidence="1">Component of the SWR1 complex which mediates the ATP-dependent exchange of histone H2A for the H2A variant HZT1 leading to transcriptional regulation of selected genes by chromatin remodeling. Involved in chromosome stability (By similarity).</text>
</comment>
<comment type="subunit">
    <text evidence="1">Component of the SWR1 chromatin remodeling complex.</text>
</comment>
<comment type="subcellular location">
    <subcellularLocation>
        <location evidence="1">Nucleus</location>
    </subcellularLocation>
</comment>
<comment type="similarity">
    <text evidence="4">Belongs to the SWC5 family.</text>
</comment>
<evidence type="ECO:0000250" key="1"/>
<evidence type="ECO:0000255" key="2">
    <source>
        <dbReference type="PROSITE-ProRule" id="PRU00610"/>
    </source>
</evidence>
<evidence type="ECO:0000256" key="3">
    <source>
        <dbReference type="SAM" id="MobiDB-lite"/>
    </source>
</evidence>
<evidence type="ECO:0000305" key="4"/>
<organism>
    <name type="scientific">Debaryomyces hansenii (strain ATCC 36239 / CBS 767 / BCRC 21394 / JCM 1990 / NBRC 0083 / IGC 2968)</name>
    <name type="common">Yeast</name>
    <name type="synonym">Torulaspora hansenii</name>
    <dbReference type="NCBI Taxonomy" id="284592"/>
    <lineage>
        <taxon>Eukaryota</taxon>
        <taxon>Fungi</taxon>
        <taxon>Dikarya</taxon>
        <taxon>Ascomycota</taxon>
        <taxon>Saccharomycotina</taxon>
        <taxon>Pichiomycetes</taxon>
        <taxon>Debaryomycetaceae</taxon>
        <taxon>Debaryomyces</taxon>
    </lineage>
</organism>
<proteinExistence type="inferred from homology"/>
<accession>Q6BWZ7</accession>
<keyword id="KW-0010">Activator</keyword>
<keyword id="KW-0156">Chromatin regulator</keyword>
<keyword id="KW-0539">Nucleus</keyword>
<keyword id="KW-1185">Reference proteome</keyword>
<keyword id="KW-0804">Transcription</keyword>
<keyword id="KW-0805">Transcription regulation</keyword>
<gene>
    <name type="primary">SWC5</name>
    <name type="ordered locus">DEHA2B07216g</name>
</gene>
<feature type="chain" id="PRO_0000212505" description="SWR1-complex protein 5">
    <location>
        <begin position="1"/>
        <end position="341"/>
    </location>
</feature>
<feature type="domain" description="BCNT-C" evidence="2">
    <location>
        <begin position="252"/>
        <end position="331"/>
    </location>
</feature>
<feature type="region of interest" description="Disordered" evidence="3">
    <location>
        <begin position="1"/>
        <end position="104"/>
    </location>
</feature>
<feature type="region of interest" description="Disordered" evidence="3">
    <location>
        <begin position="125"/>
        <end position="180"/>
    </location>
</feature>
<feature type="region of interest" description="Disordered" evidence="3">
    <location>
        <begin position="316"/>
        <end position="341"/>
    </location>
</feature>
<feature type="compositionally biased region" description="Basic and acidic residues" evidence="3">
    <location>
        <begin position="13"/>
        <end position="32"/>
    </location>
</feature>
<feature type="compositionally biased region" description="Acidic residues" evidence="3">
    <location>
        <begin position="33"/>
        <end position="46"/>
    </location>
</feature>
<feature type="compositionally biased region" description="Acidic residues" evidence="3">
    <location>
        <begin position="54"/>
        <end position="63"/>
    </location>
</feature>
<feature type="compositionally biased region" description="Polar residues" evidence="3">
    <location>
        <begin position="69"/>
        <end position="78"/>
    </location>
</feature>
<feature type="compositionally biased region" description="Basic and acidic residues" evidence="3">
    <location>
        <begin position="134"/>
        <end position="151"/>
    </location>
</feature>
<feature type="compositionally biased region" description="Polar residues" evidence="3">
    <location>
        <begin position="152"/>
        <end position="170"/>
    </location>
</feature>
<feature type="compositionally biased region" description="Basic and acidic residues" evidence="3">
    <location>
        <begin position="316"/>
        <end position="331"/>
    </location>
</feature>
<protein>
    <recommendedName>
        <fullName>SWR1-complex protein 5</fullName>
    </recommendedName>
</protein>
<name>SWC5_DEBHA</name>